<evidence type="ECO:0000255" key="1">
    <source>
        <dbReference type="HAMAP-Rule" id="MF_01315"/>
    </source>
</evidence>
<evidence type="ECO:0000256" key="2">
    <source>
        <dbReference type="SAM" id="MobiDB-lite"/>
    </source>
</evidence>
<evidence type="ECO:0000305" key="3"/>
<proteinExistence type="evidence at protein level"/>
<name>RS13_LACLM</name>
<accession>A2RNM9</accession>
<organism>
    <name type="scientific">Lactococcus lactis subsp. cremoris (strain MG1363)</name>
    <dbReference type="NCBI Taxonomy" id="416870"/>
    <lineage>
        <taxon>Bacteria</taxon>
        <taxon>Bacillati</taxon>
        <taxon>Bacillota</taxon>
        <taxon>Bacilli</taxon>
        <taxon>Lactobacillales</taxon>
        <taxon>Streptococcaceae</taxon>
        <taxon>Lactococcus</taxon>
        <taxon>Lactococcus cremoris subsp. cremoris</taxon>
    </lineage>
</organism>
<protein>
    <recommendedName>
        <fullName evidence="1">Small ribosomal subunit protein uS13</fullName>
    </recommendedName>
    <alternativeName>
        <fullName evidence="3">30S ribosomal protein S13</fullName>
    </alternativeName>
</protein>
<dbReference type="EMBL" id="AM406671">
    <property type="protein sequence ID" value="CAL98920.1"/>
    <property type="molecule type" value="Genomic_DNA"/>
</dbReference>
<dbReference type="RefSeq" id="WP_003130555.1">
    <property type="nucleotide sequence ID" value="NZ_WJVF01000005.1"/>
</dbReference>
<dbReference type="PDB" id="5MYJ">
    <property type="method" value="EM"/>
    <property type="resolution" value="5.60 A"/>
    <property type="chains" value="AM=1-121"/>
</dbReference>
<dbReference type="PDBsum" id="5MYJ"/>
<dbReference type="EMDB" id="EMD-3581"/>
<dbReference type="SMR" id="A2RNM9"/>
<dbReference type="STRING" id="416870.llmg_2356"/>
<dbReference type="GeneID" id="89634422"/>
<dbReference type="KEGG" id="llm:llmg_2356"/>
<dbReference type="eggNOG" id="COG0099">
    <property type="taxonomic scope" value="Bacteria"/>
</dbReference>
<dbReference type="HOGENOM" id="CLU_103849_1_1_9"/>
<dbReference type="OrthoDB" id="9803610at2"/>
<dbReference type="PhylomeDB" id="A2RNM9"/>
<dbReference type="Proteomes" id="UP000000364">
    <property type="component" value="Chromosome"/>
</dbReference>
<dbReference type="GO" id="GO:0005829">
    <property type="term" value="C:cytosol"/>
    <property type="evidence" value="ECO:0007669"/>
    <property type="project" value="TreeGrafter"/>
</dbReference>
<dbReference type="GO" id="GO:0015935">
    <property type="term" value="C:small ribosomal subunit"/>
    <property type="evidence" value="ECO:0007669"/>
    <property type="project" value="TreeGrafter"/>
</dbReference>
<dbReference type="GO" id="GO:0019843">
    <property type="term" value="F:rRNA binding"/>
    <property type="evidence" value="ECO:0007669"/>
    <property type="project" value="UniProtKB-UniRule"/>
</dbReference>
<dbReference type="GO" id="GO:0003735">
    <property type="term" value="F:structural constituent of ribosome"/>
    <property type="evidence" value="ECO:0007669"/>
    <property type="project" value="InterPro"/>
</dbReference>
<dbReference type="GO" id="GO:0000049">
    <property type="term" value="F:tRNA binding"/>
    <property type="evidence" value="ECO:0007669"/>
    <property type="project" value="UniProtKB-UniRule"/>
</dbReference>
<dbReference type="GO" id="GO:0006412">
    <property type="term" value="P:translation"/>
    <property type="evidence" value="ECO:0007669"/>
    <property type="project" value="UniProtKB-UniRule"/>
</dbReference>
<dbReference type="FunFam" id="1.10.8.50:FF:000001">
    <property type="entry name" value="30S ribosomal protein S13"/>
    <property type="match status" value="1"/>
</dbReference>
<dbReference type="FunFam" id="4.10.910.10:FF:000001">
    <property type="entry name" value="30S ribosomal protein S13"/>
    <property type="match status" value="1"/>
</dbReference>
<dbReference type="Gene3D" id="1.10.8.50">
    <property type="match status" value="1"/>
</dbReference>
<dbReference type="Gene3D" id="4.10.910.10">
    <property type="entry name" value="30s ribosomal protein s13, domain 2"/>
    <property type="match status" value="1"/>
</dbReference>
<dbReference type="HAMAP" id="MF_01315">
    <property type="entry name" value="Ribosomal_uS13"/>
    <property type="match status" value="1"/>
</dbReference>
<dbReference type="InterPro" id="IPR027437">
    <property type="entry name" value="Rbsml_uS13_C"/>
</dbReference>
<dbReference type="InterPro" id="IPR001892">
    <property type="entry name" value="Ribosomal_uS13"/>
</dbReference>
<dbReference type="InterPro" id="IPR010979">
    <property type="entry name" value="Ribosomal_uS13-like_H2TH"/>
</dbReference>
<dbReference type="InterPro" id="IPR019980">
    <property type="entry name" value="Ribosomal_uS13_bac-type"/>
</dbReference>
<dbReference type="InterPro" id="IPR018269">
    <property type="entry name" value="Ribosomal_uS13_CS"/>
</dbReference>
<dbReference type="NCBIfam" id="TIGR03631">
    <property type="entry name" value="uS13_bact"/>
    <property type="match status" value="1"/>
</dbReference>
<dbReference type="PANTHER" id="PTHR10871">
    <property type="entry name" value="30S RIBOSOMAL PROTEIN S13/40S RIBOSOMAL PROTEIN S18"/>
    <property type="match status" value="1"/>
</dbReference>
<dbReference type="PANTHER" id="PTHR10871:SF1">
    <property type="entry name" value="SMALL RIBOSOMAL SUBUNIT PROTEIN US13M"/>
    <property type="match status" value="1"/>
</dbReference>
<dbReference type="Pfam" id="PF00416">
    <property type="entry name" value="Ribosomal_S13"/>
    <property type="match status" value="1"/>
</dbReference>
<dbReference type="PIRSF" id="PIRSF002134">
    <property type="entry name" value="Ribosomal_S13"/>
    <property type="match status" value="1"/>
</dbReference>
<dbReference type="SUPFAM" id="SSF46946">
    <property type="entry name" value="S13-like H2TH domain"/>
    <property type="match status" value="1"/>
</dbReference>
<dbReference type="PROSITE" id="PS00646">
    <property type="entry name" value="RIBOSOMAL_S13_1"/>
    <property type="match status" value="1"/>
</dbReference>
<dbReference type="PROSITE" id="PS50159">
    <property type="entry name" value="RIBOSOMAL_S13_2"/>
    <property type="match status" value="1"/>
</dbReference>
<gene>
    <name evidence="1" type="primary">rpsM</name>
    <name type="ordered locus">llmg_2356</name>
</gene>
<comment type="function">
    <text evidence="1">Located at the top of the head of the 30S subunit, it contacts several helices of the 16S rRNA. In the 70S ribosome it contacts the 23S rRNA (bridge B1a) and protein L5 of the 50S subunit (bridge B1b), connecting the 2 subunits; these bridges are implicated in subunit movement. Contacts the tRNAs in the A and P-sites.</text>
</comment>
<comment type="subunit">
    <text evidence="1">Part of the 30S ribosomal subunit. Forms a loose heterodimer with protein S19. Forms two bridges to the 50S subunit in the 70S ribosome.</text>
</comment>
<comment type="similarity">
    <text evidence="1">Belongs to the universal ribosomal protein uS13 family.</text>
</comment>
<sequence>MARFAGVDIPNEKRIVISLTYVFGVGLQTSKKVLAAAGVSEDIRTKDLTSDQEDAIRRELDGLKLEGDLRREVSLNIKRLMEIGSYRGMRHRRGLPTRGQNTKNNARTRKGPAKSIAGKKK</sequence>
<reference key="1">
    <citation type="journal article" date="2007" name="J. Bacteriol.">
        <title>The complete genome sequence of the lactic acid bacterial paradigm Lactococcus lactis subsp. cremoris MG1363.</title>
        <authorList>
            <person name="Wegmann U."/>
            <person name="O'Connell-Motherway M."/>
            <person name="Zomer A."/>
            <person name="Buist G."/>
            <person name="Shearman C."/>
            <person name="Canchaya C."/>
            <person name="Ventura M."/>
            <person name="Goesmann A."/>
            <person name="Gasson M.J."/>
            <person name="Kuipers O.P."/>
            <person name="van Sinderen D."/>
            <person name="Kok J."/>
        </authorList>
    </citation>
    <scope>NUCLEOTIDE SEQUENCE [LARGE SCALE GENOMIC DNA]</scope>
    <source>
        <strain>MG1363</strain>
    </source>
</reference>
<keyword id="KW-0002">3D-structure</keyword>
<keyword id="KW-0687">Ribonucleoprotein</keyword>
<keyword id="KW-0689">Ribosomal protein</keyword>
<keyword id="KW-0694">RNA-binding</keyword>
<keyword id="KW-0699">rRNA-binding</keyword>
<keyword id="KW-0820">tRNA-binding</keyword>
<feature type="chain" id="PRO_0000306631" description="Small ribosomal subunit protein uS13">
    <location>
        <begin position="1"/>
        <end position="121"/>
    </location>
</feature>
<feature type="region of interest" description="Disordered" evidence="2">
    <location>
        <begin position="88"/>
        <end position="121"/>
    </location>
</feature>
<feature type="compositionally biased region" description="Basic residues" evidence="2">
    <location>
        <begin position="106"/>
        <end position="121"/>
    </location>
</feature>